<dbReference type="EMBL" id="AP006618">
    <property type="protein sequence ID" value="BAD59972.1"/>
    <property type="molecule type" value="Genomic_DNA"/>
</dbReference>
<dbReference type="RefSeq" id="WP_011211654.1">
    <property type="nucleotide sequence ID" value="NC_006361.1"/>
</dbReference>
<dbReference type="SMR" id="Q5YPB9"/>
<dbReference type="STRING" id="247156.NFA_51200"/>
<dbReference type="GeneID" id="61135698"/>
<dbReference type="KEGG" id="nfa:NFA_51200"/>
<dbReference type="eggNOG" id="COG1666">
    <property type="taxonomic scope" value="Bacteria"/>
</dbReference>
<dbReference type="HOGENOM" id="CLU_099839_0_0_11"/>
<dbReference type="OrthoDB" id="9801447at2"/>
<dbReference type="Proteomes" id="UP000006820">
    <property type="component" value="Chromosome"/>
</dbReference>
<dbReference type="GO" id="GO:0005829">
    <property type="term" value="C:cytosol"/>
    <property type="evidence" value="ECO:0007669"/>
    <property type="project" value="TreeGrafter"/>
</dbReference>
<dbReference type="GO" id="GO:0000166">
    <property type="term" value="F:nucleotide binding"/>
    <property type="evidence" value="ECO:0007669"/>
    <property type="project" value="TreeGrafter"/>
</dbReference>
<dbReference type="CDD" id="cd11740">
    <property type="entry name" value="YajQ_like"/>
    <property type="match status" value="1"/>
</dbReference>
<dbReference type="FunFam" id="3.30.70.860:FF:000004">
    <property type="entry name" value="UPF0234 protein AWC22_11905"/>
    <property type="match status" value="1"/>
</dbReference>
<dbReference type="Gene3D" id="3.30.70.860">
    <property type="match status" value="1"/>
</dbReference>
<dbReference type="Gene3D" id="3.30.70.990">
    <property type="entry name" value="YajQ-like, domain 2"/>
    <property type="match status" value="1"/>
</dbReference>
<dbReference type="HAMAP" id="MF_00632">
    <property type="entry name" value="YajQ"/>
    <property type="match status" value="1"/>
</dbReference>
<dbReference type="InterPro" id="IPR007551">
    <property type="entry name" value="DUF520"/>
</dbReference>
<dbReference type="InterPro" id="IPR035571">
    <property type="entry name" value="UPF0234-like_C"/>
</dbReference>
<dbReference type="InterPro" id="IPR035570">
    <property type="entry name" value="UPF0234_N"/>
</dbReference>
<dbReference type="InterPro" id="IPR036183">
    <property type="entry name" value="YajQ-like_sf"/>
</dbReference>
<dbReference type="NCBIfam" id="NF003819">
    <property type="entry name" value="PRK05412.1"/>
    <property type="match status" value="1"/>
</dbReference>
<dbReference type="PANTHER" id="PTHR30476">
    <property type="entry name" value="UPF0234 PROTEIN YAJQ"/>
    <property type="match status" value="1"/>
</dbReference>
<dbReference type="PANTHER" id="PTHR30476:SF0">
    <property type="entry name" value="UPF0234 PROTEIN YAJQ"/>
    <property type="match status" value="1"/>
</dbReference>
<dbReference type="Pfam" id="PF04461">
    <property type="entry name" value="DUF520"/>
    <property type="match status" value="1"/>
</dbReference>
<dbReference type="SUPFAM" id="SSF89963">
    <property type="entry name" value="YajQ-like"/>
    <property type="match status" value="2"/>
</dbReference>
<comment type="function">
    <text evidence="1">Nucleotide-binding protein.</text>
</comment>
<comment type="similarity">
    <text evidence="1">Belongs to the YajQ family.</text>
</comment>
<sequence length="163" mass="18166">MADSSFDVVSKVDRQEVDNALHQAEKELNTRYDFRGTGAKIEWSGEDKIVLTAEAEERVKAALEVFKEKLIRRDISLKAFDAGEPVASGKTYKITGTLVQGIDAEHAKKISKKIRDEGPKGVKAQIQGDELRVSSKKRDDLQAVIALLKSEDFGIALQFVNYR</sequence>
<accession>Q5YPB9</accession>
<protein>
    <recommendedName>
        <fullName evidence="1">Nucleotide-binding protein NFA_51200</fullName>
    </recommendedName>
</protein>
<proteinExistence type="inferred from homology"/>
<gene>
    <name type="ordered locus">NFA_51200</name>
</gene>
<keyword id="KW-0547">Nucleotide-binding</keyword>
<keyword id="KW-1185">Reference proteome</keyword>
<evidence type="ECO:0000255" key="1">
    <source>
        <dbReference type="HAMAP-Rule" id="MF_00632"/>
    </source>
</evidence>
<organism>
    <name type="scientific">Nocardia farcinica (strain IFM 10152)</name>
    <dbReference type="NCBI Taxonomy" id="247156"/>
    <lineage>
        <taxon>Bacteria</taxon>
        <taxon>Bacillati</taxon>
        <taxon>Actinomycetota</taxon>
        <taxon>Actinomycetes</taxon>
        <taxon>Mycobacteriales</taxon>
        <taxon>Nocardiaceae</taxon>
        <taxon>Nocardia</taxon>
    </lineage>
</organism>
<name>Y5120_NOCFA</name>
<feature type="chain" id="PRO_0000261955" description="Nucleotide-binding protein NFA_51200">
    <location>
        <begin position="1"/>
        <end position="163"/>
    </location>
</feature>
<reference key="1">
    <citation type="journal article" date="2004" name="Proc. Natl. Acad. Sci. U.S.A.">
        <title>The complete genomic sequence of Nocardia farcinica IFM 10152.</title>
        <authorList>
            <person name="Ishikawa J."/>
            <person name="Yamashita A."/>
            <person name="Mikami Y."/>
            <person name="Hoshino Y."/>
            <person name="Kurita H."/>
            <person name="Hotta K."/>
            <person name="Shiba T."/>
            <person name="Hattori M."/>
        </authorList>
    </citation>
    <scope>NUCLEOTIDE SEQUENCE [LARGE SCALE GENOMIC DNA]</scope>
    <source>
        <strain>IFM 10152</strain>
    </source>
</reference>